<evidence type="ECO:0000255" key="1">
    <source>
        <dbReference type="HAMAP-Rule" id="MF_01366"/>
    </source>
</evidence>
<evidence type="ECO:0000305" key="2"/>
<reference key="1">
    <citation type="journal article" date="2011" name="J. Bacteriol.">
        <title>Genome sequence of Thermotoga sp. strain RQ2, a hyperthermophilic bacterium isolated from a geothermally heated region of the seafloor near Ribeira Quente, the Azores.</title>
        <authorList>
            <person name="Swithers K.S."/>
            <person name="DiPippo J.L."/>
            <person name="Bruce D.C."/>
            <person name="Detter C."/>
            <person name="Tapia R."/>
            <person name="Han S."/>
            <person name="Saunders E."/>
            <person name="Goodwin L.A."/>
            <person name="Han J."/>
            <person name="Woyke T."/>
            <person name="Pitluck S."/>
            <person name="Pennacchio L."/>
            <person name="Nolan M."/>
            <person name="Mikhailova N."/>
            <person name="Lykidis A."/>
            <person name="Land M.L."/>
            <person name="Brettin T."/>
            <person name="Stetter K.O."/>
            <person name="Nelson K.E."/>
            <person name="Gogarten J.P."/>
            <person name="Noll K.M."/>
        </authorList>
    </citation>
    <scope>NUCLEOTIDE SEQUENCE [LARGE SCALE GENOMIC DNA]</scope>
    <source>
        <strain>RQ2</strain>
    </source>
</reference>
<protein>
    <recommendedName>
        <fullName evidence="1">Large ribosomal subunit protein uL13</fullName>
    </recommendedName>
    <alternativeName>
        <fullName evidence="2">50S ribosomal protein L13</fullName>
    </alternativeName>
</protein>
<comment type="function">
    <text evidence="1">This protein is one of the early assembly proteins of the 50S ribosomal subunit, although it is not seen to bind rRNA by itself. It is important during the early stages of 50S assembly.</text>
</comment>
<comment type="subunit">
    <text evidence="1">Part of the 50S ribosomal subunit.</text>
</comment>
<comment type="similarity">
    <text evidence="1">Belongs to the universal ribosomal protein uL13 family.</text>
</comment>
<feature type="chain" id="PRO_1000144192" description="Large ribosomal subunit protein uL13">
    <location>
        <begin position="1"/>
        <end position="149"/>
    </location>
</feature>
<accession>B1LBJ2</accession>
<name>RL13_THESQ</name>
<organism>
    <name type="scientific">Thermotoga sp. (strain RQ2)</name>
    <dbReference type="NCBI Taxonomy" id="126740"/>
    <lineage>
        <taxon>Bacteria</taxon>
        <taxon>Thermotogati</taxon>
        <taxon>Thermotogota</taxon>
        <taxon>Thermotogae</taxon>
        <taxon>Thermotogales</taxon>
        <taxon>Thermotogaceae</taxon>
        <taxon>Thermotoga</taxon>
    </lineage>
</organism>
<proteinExistence type="inferred from homology"/>
<gene>
    <name evidence="1" type="primary">rplM</name>
    <name type="ordered locus">TRQ2_1346</name>
</gene>
<sequence>MARYFPVQKTTMIKPEEVERKWYVVDASGKVLGRLATRIAKILMGKHKPNYTPHVDTGDYVIVVNADKVVLTGKKLDQKVYYWHSGYPGGLKSLTARQMLEKHPERLIWLAVKRMLPKNRKGRKMLKRLKVYASPEHPHQAQKPEPIEL</sequence>
<dbReference type="EMBL" id="CP000969">
    <property type="protein sequence ID" value="ACB09690.1"/>
    <property type="molecule type" value="Genomic_DNA"/>
</dbReference>
<dbReference type="RefSeq" id="WP_004081738.1">
    <property type="nucleotide sequence ID" value="NC_010483.1"/>
</dbReference>
<dbReference type="SMR" id="B1LBJ2"/>
<dbReference type="KEGG" id="trq:TRQ2_1346"/>
<dbReference type="HOGENOM" id="CLU_082184_2_2_0"/>
<dbReference type="Proteomes" id="UP000001687">
    <property type="component" value="Chromosome"/>
</dbReference>
<dbReference type="GO" id="GO:0022625">
    <property type="term" value="C:cytosolic large ribosomal subunit"/>
    <property type="evidence" value="ECO:0007669"/>
    <property type="project" value="TreeGrafter"/>
</dbReference>
<dbReference type="GO" id="GO:0003729">
    <property type="term" value="F:mRNA binding"/>
    <property type="evidence" value="ECO:0007669"/>
    <property type="project" value="TreeGrafter"/>
</dbReference>
<dbReference type="GO" id="GO:0003735">
    <property type="term" value="F:structural constituent of ribosome"/>
    <property type="evidence" value="ECO:0007669"/>
    <property type="project" value="InterPro"/>
</dbReference>
<dbReference type="GO" id="GO:0017148">
    <property type="term" value="P:negative regulation of translation"/>
    <property type="evidence" value="ECO:0007669"/>
    <property type="project" value="TreeGrafter"/>
</dbReference>
<dbReference type="GO" id="GO:0006412">
    <property type="term" value="P:translation"/>
    <property type="evidence" value="ECO:0007669"/>
    <property type="project" value="UniProtKB-UniRule"/>
</dbReference>
<dbReference type="CDD" id="cd00392">
    <property type="entry name" value="Ribosomal_L13"/>
    <property type="match status" value="1"/>
</dbReference>
<dbReference type="FunFam" id="3.90.1180.10:FF:000001">
    <property type="entry name" value="50S ribosomal protein L13"/>
    <property type="match status" value="1"/>
</dbReference>
<dbReference type="Gene3D" id="3.90.1180.10">
    <property type="entry name" value="Ribosomal protein L13"/>
    <property type="match status" value="1"/>
</dbReference>
<dbReference type="HAMAP" id="MF_01366">
    <property type="entry name" value="Ribosomal_uL13"/>
    <property type="match status" value="1"/>
</dbReference>
<dbReference type="InterPro" id="IPR005822">
    <property type="entry name" value="Ribosomal_uL13"/>
</dbReference>
<dbReference type="InterPro" id="IPR005823">
    <property type="entry name" value="Ribosomal_uL13_bac-type"/>
</dbReference>
<dbReference type="InterPro" id="IPR023563">
    <property type="entry name" value="Ribosomal_uL13_CS"/>
</dbReference>
<dbReference type="InterPro" id="IPR036899">
    <property type="entry name" value="Ribosomal_uL13_sf"/>
</dbReference>
<dbReference type="NCBIfam" id="TIGR01066">
    <property type="entry name" value="rplM_bact"/>
    <property type="match status" value="1"/>
</dbReference>
<dbReference type="PANTHER" id="PTHR11545:SF2">
    <property type="entry name" value="LARGE RIBOSOMAL SUBUNIT PROTEIN UL13M"/>
    <property type="match status" value="1"/>
</dbReference>
<dbReference type="PANTHER" id="PTHR11545">
    <property type="entry name" value="RIBOSOMAL PROTEIN L13"/>
    <property type="match status" value="1"/>
</dbReference>
<dbReference type="Pfam" id="PF00572">
    <property type="entry name" value="Ribosomal_L13"/>
    <property type="match status" value="1"/>
</dbReference>
<dbReference type="PIRSF" id="PIRSF002181">
    <property type="entry name" value="Ribosomal_L13"/>
    <property type="match status" value="1"/>
</dbReference>
<dbReference type="SUPFAM" id="SSF52161">
    <property type="entry name" value="Ribosomal protein L13"/>
    <property type="match status" value="1"/>
</dbReference>
<dbReference type="PROSITE" id="PS00783">
    <property type="entry name" value="RIBOSOMAL_L13"/>
    <property type="match status" value="1"/>
</dbReference>
<keyword id="KW-0687">Ribonucleoprotein</keyword>
<keyword id="KW-0689">Ribosomal protein</keyword>